<comment type="function">
    <text evidence="1">Catalyzes the NADPH-dependent reduction of N-acetyl-5-glutamyl phosphate to yield N-acetyl-L-glutamate 5-semialdehyde.</text>
</comment>
<comment type="catalytic activity">
    <reaction evidence="1">
        <text>N-acetyl-L-glutamate 5-semialdehyde + phosphate + NADP(+) = N-acetyl-L-glutamyl 5-phosphate + NADPH + H(+)</text>
        <dbReference type="Rhea" id="RHEA:21588"/>
        <dbReference type="ChEBI" id="CHEBI:15378"/>
        <dbReference type="ChEBI" id="CHEBI:29123"/>
        <dbReference type="ChEBI" id="CHEBI:43474"/>
        <dbReference type="ChEBI" id="CHEBI:57783"/>
        <dbReference type="ChEBI" id="CHEBI:57936"/>
        <dbReference type="ChEBI" id="CHEBI:58349"/>
        <dbReference type="EC" id="1.2.1.38"/>
    </reaction>
</comment>
<comment type="pathway">
    <text evidence="1">Amino-acid biosynthesis; L-arginine biosynthesis; N(2)-acetyl-L-ornithine from L-glutamate: step 3/4.</text>
</comment>
<comment type="subcellular location">
    <subcellularLocation>
        <location evidence="1">Cytoplasm</location>
    </subcellularLocation>
</comment>
<comment type="similarity">
    <text evidence="1">Belongs to the NAGSA dehydrogenase family. Type 1 subfamily.</text>
</comment>
<organism>
    <name type="scientific">Bordetella pertussis (strain Tohama I / ATCC BAA-589 / NCTC 13251)</name>
    <dbReference type="NCBI Taxonomy" id="257313"/>
    <lineage>
        <taxon>Bacteria</taxon>
        <taxon>Pseudomonadati</taxon>
        <taxon>Pseudomonadota</taxon>
        <taxon>Betaproteobacteria</taxon>
        <taxon>Burkholderiales</taxon>
        <taxon>Alcaligenaceae</taxon>
        <taxon>Bordetella</taxon>
    </lineage>
</organism>
<feature type="chain" id="PRO_0000112390" description="N-acetyl-gamma-glutamyl-phosphate reductase">
    <location>
        <begin position="1"/>
        <end position="354"/>
    </location>
</feature>
<feature type="active site" evidence="1">
    <location>
        <position position="156"/>
    </location>
</feature>
<sequence>MAQASNSRIKVGIVGGTGYTGVELLRLLSQHPHVELTAITSRKEDGLPVADMYPNLRGRVKLAFSAPEKASLTDCDVVFFATPHGVAMAQAAELLAAGTRVIDLAADFRLQDTAVFERWYKIPHTCPDILADSVYGLVELNREAISKARVIGNPGCYPTTVLLGLAPLIEGGKQLVDVQTLIADCKSGVSGAGRKAEVGSLFSEASDNFKAYGVAGHRHQPEIVAQLEKLAGGKVGLTFVPHLVPMIRGMFSTLYARILPQARDTDFQALFEARYADEPFVDVMPAGSLPETRSVRASNNLRISVQRPGGGDQLVILVVQDNLVKGASGQAVQNMNLMFGLPESAGLDQVAILP</sequence>
<reference key="1">
    <citation type="journal article" date="2003" name="Nat. Genet.">
        <title>Comparative analysis of the genome sequences of Bordetella pertussis, Bordetella parapertussis and Bordetella bronchiseptica.</title>
        <authorList>
            <person name="Parkhill J."/>
            <person name="Sebaihia M."/>
            <person name="Preston A."/>
            <person name="Murphy L.D."/>
            <person name="Thomson N.R."/>
            <person name="Harris D.E."/>
            <person name="Holden M.T.G."/>
            <person name="Churcher C.M."/>
            <person name="Bentley S.D."/>
            <person name="Mungall K.L."/>
            <person name="Cerdeno-Tarraga A.-M."/>
            <person name="Temple L."/>
            <person name="James K.D."/>
            <person name="Harris B."/>
            <person name="Quail M.A."/>
            <person name="Achtman M."/>
            <person name="Atkin R."/>
            <person name="Baker S."/>
            <person name="Basham D."/>
            <person name="Bason N."/>
            <person name="Cherevach I."/>
            <person name="Chillingworth T."/>
            <person name="Collins M."/>
            <person name="Cronin A."/>
            <person name="Davis P."/>
            <person name="Doggett J."/>
            <person name="Feltwell T."/>
            <person name="Goble A."/>
            <person name="Hamlin N."/>
            <person name="Hauser H."/>
            <person name="Holroyd S."/>
            <person name="Jagels K."/>
            <person name="Leather S."/>
            <person name="Moule S."/>
            <person name="Norberczak H."/>
            <person name="O'Neil S."/>
            <person name="Ormond D."/>
            <person name="Price C."/>
            <person name="Rabbinowitsch E."/>
            <person name="Rutter S."/>
            <person name="Sanders M."/>
            <person name="Saunders D."/>
            <person name="Seeger K."/>
            <person name="Sharp S."/>
            <person name="Simmonds M."/>
            <person name="Skelton J."/>
            <person name="Squares R."/>
            <person name="Squares S."/>
            <person name="Stevens K."/>
            <person name="Unwin L."/>
            <person name="Whitehead S."/>
            <person name="Barrell B.G."/>
            <person name="Maskell D.J."/>
        </authorList>
    </citation>
    <scope>NUCLEOTIDE SEQUENCE [LARGE SCALE GENOMIC DNA]</scope>
    <source>
        <strain>Tohama I / ATCC BAA-589 / NCTC 13251</strain>
    </source>
</reference>
<keyword id="KW-0028">Amino-acid biosynthesis</keyword>
<keyword id="KW-0055">Arginine biosynthesis</keyword>
<keyword id="KW-0963">Cytoplasm</keyword>
<keyword id="KW-0521">NADP</keyword>
<keyword id="KW-0560">Oxidoreductase</keyword>
<keyword id="KW-1185">Reference proteome</keyword>
<accession>Q7VUW0</accession>
<proteinExistence type="inferred from homology"/>
<gene>
    <name evidence="1" type="primary">argC</name>
    <name type="ordered locus">BP2960</name>
</gene>
<evidence type="ECO:0000255" key="1">
    <source>
        <dbReference type="HAMAP-Rule" id="MF_00150"/>
    </source>
</evidence>
<dbReference type="EC" id="1.2.1.38" evidence="1"/>
<dbReference type="EMBL" id="BX640420">
    <property type="protein sequence ID" value="CAE43232.1"/>
    <property type="molecule type" value="Genomic_DNA"/>
</dbReference>
<dbReference type="RefSeq" id="NP_881539.1">
    <property type="nucleotide sequence ID" value="NC_002929.2"/>
</dbReference>
<dbReference type="RefSeq" id="WP_003820599.1">
    <property type="nucleotide sequence ID" value="NZ_CP039022.1"/>
</dbReference>
<dbReference type="SMR" id="Q7VUW0"/>
<dbReference type="STRING" id="257313.BP2960"/>
<dbReference type="PaxDb" id="257313-BP2960"/>
<dbReference type="GeneID" id="69602885"/>
<dbReference type="KEGG" id="bpe:BP2960"/>
<dbReference type="PATRIC" id="fig|257313.5.peg.3202"/>
<dbReference type="eggNOG" id="COG0002">
    <property type="taxonomic scope" value="Bacteria"/>
</dbReference>
<dbReference type="HOGENOM" id="CLU_006384_0_1_4"/>
<dbReference type="UniPathway" id="UPA00068">
    <property type="reaction ID" value="UER00108"/>
</dbReference>
<dbReference type="Proteomes" id="UP000002676">
    <property type="component" value="Chromosome"/>
</dbReference>
<dbReference type="GO" id="GO:0005737">
    <property type="term" value="C:cytoplasm"/>
    <property type="evidence" value="ECO:0007669"/>
    <property type="project" value="UniProtKB-SubCell"/>
</dbReference>
<dbReference type="GO" id="GO:0003942">
    <property type="term" value="F:N-acetyl-gamma-glutamyl-phosphate reductase activity"/>
    <property type="evidence" value="ECO:0007669"/>
    <property type="project" value="UniProtKB-UniRule"/>
</dbReference>
<dbReference type="GO" id="GO:0051287">
    <property type="term" value="F:NAD binding"/>
    <property type="evidence" value="ECO:0007669"/>
    <property type="project" value="InterPro"/>
</dbReference>
<dbReference type="GO" id="GO:0070401">
    <property type="term" value="F:NADP+ binding"/>
    <property type="evidence" value="ECO:0007669"/>
    <property type="project" value="InterPro"/>
</dbReference>
<dbReference type="GO" id="GO:0006526">
    <property type="term" value="P:L-arginine biosynthetic process"/>
    <property type="evidence" value="ECO:0007669"/>
    <property type="project" value="UniProtKB-UniRule"/>
</dbReference>
<dbReference type="CDD" id="cd23934">
    <property type="entry name" value="AGPR_1_C"/>
    <property type="match status" value="1"/>
</dbReference>
<dbReference type="CDD" id="cd17895">
    <property type="entry name" value="AGPR_1_N"/>
    <property type="match status" value="1"/>
</dbReference>
<dbReference type="FunFam" id="3.30.360.10:FF:000014">
    <property type="entry name" value="N-acetyl-gamma-glutamyl-phosphate reductase"/>
    <property type="match status" value="1"/>
</dbReference>
<dbReference type="Gene3D" id="3.30.360.10">
    <property type="entry name" value="Dihydrodipicolinate Reductase, domain 2"/>
    <property type="match status" value="1"/>
</dbReference>
<dbReference type="Gene3D" id="3.40.50.720">
    <property type="entry name" value="NAD(P)-binding Rossmann-like Domain"/>
    <property type="match status" value="1"/>
</dbReference>
<dbReference type="HAMAP" id="MF_00150">
    <property type="entry name" value="ArgC_type1"/>
    <property type="match status" value="1"/>
</dbReference>
<dbReference type="InterPro" id="IPR023013">
    <property type="entry name" value="AGPR_AS"/>
</dbReference>
<dbReference type="InterPro" id="IPR000706">
    <property type="entry name" value="AGPR_type-1"/>
</dbReference>
<dbReference type="InterPro" id="IPR036291">
    <property type="entry name" value="NAD(P)-bd_dom_sf"/>
</dbReference>
<dbReference type="InterPro" id="IPR050085">
    <property type="entry name" value="NAGSA_dehydrogenase"/>
</dbReference>
<dbReference type="InterPro" id="IPR000534">
    <property type="entry name" value="Semialdehyde_DH_NAD-bd"/>
</dbReference>
<dbReference type="NCBIfam" id="TIGR01850">
    <property type="entry name" value="argC"/>
    <property type="match status" value="1"/>
</dbReference>
<dbReference type="PANTHER" id="PTHR32338:SF10">
    <property type="entry name" value="N-ACETYL-GAMMA-GLUTAMYL-PHOSPHATE REDUCTASE, CHLOROPLASTIC-RELATED"/>
    <property type="match status" value="1"/>
</dbReference>
<dbReference type="PANTHER" id="PTHR32338">
    <property type="entry name" value="N-ACETYL-GAMMA-GLUTAMYL-PHOSPHATE REDUCTASE, CHLOROPLASTIC-RELATED-RELATED"/>
    <property type="match status" value="1"/>
</dbReference>
<dbReference type="Pfam" id="PF01118">
    <property type="entry name" value="Semialdhyde_dh"/>
    <property type="match status" value="1"/>
</dbReference>
<dbReference type="Pfam" id="PF22698">
    <property type="entry name" value="Semialdhyde_dhC_1"/>
    <property type="match status" value="1"/>
</dbReference>
<dbReference type="SMART" id="SM00859">
    <property type="entry name" value="Semialdhyde_dh"/>
    <property type="match status" value="1"/>
</dbReference>
<dbReference type="SUPFAM" id="SSF55347">
    <property type="entry name" value="Glyceraldehyde-3-phosphate dehydrogenase-like, C-terminal domain"/>
    <property type="match status" value="1"/>
</dbReference>
<dbReference type="SUPFAM" id="SSF51735">
    <property type="entry name" value="NAD(P)-binding Rossmann-fold domains"/>
    <property type="match status" value="1"/>
</dbReference>
<dbReference type="PROSITE" id="PS01224">
    <property type="entry name" value="ARGC"/>
    <property type="match status" value="1"/>
</dbReference>
<protein>
    <recommendedName>
        <fullName evidence="1">N-acetyl-gamma-glutamyl-phosphate reductase</fullName>
        <shortName evidence="1">AGPR</shortName>
        <ecNumber evidence="1">1.2.1.38</ecNumber>
    </recommendedName>
    <alternativeName>
        <fullName evidence="1">N-acetyl-glutamate semialdehyde dehydrogenase</fullName>
        <shortName evidence="1">NAGSA dehydrogenase</shortName>
    </alternativeName>
</protein>
<name>ARGC_BORPE</name>